<feature type="chain" id="PRO_0000377148" description="tRNA dimethylallyltransferase">
    <location>
        <begin position="1"/>
        <end position="337"/>
    </location>
</feature>
<feature type="region of interest" description="Interaction with substrate tRNA" evidence="1">
    <location>
        <begin position="49"/>
        <end position="52"/>
    </location>
</feature>
<feature type="region of interest" description="Interaction with substrate tRNA" evidence="1">
    <location>
        <begin position="188"/>
        <end position="192"/>
    </location>
</feature>
<feature type="binding site" evidence="1">
    <location>
        <begin position="24"/>
        <end position="31"/>
    </location>
    <ligand>
        <name>ATP</name>
        <dbReference type="ChEBI" id="CHEBI:30616"/>
    </ligand>
</feature>
<feature type="binding site" evidence="1">
    <location>
        <begin position="26"/>
        <end position="31"/>
    </location>
    <ligand>
        <name>substrate</name>
    </ligand>
</feature>
<feature type="site" description="Interaction with substrate tRNA" evidence="1">
    <location>
        <position position="130"/>
    </location>
</feature>
<proteinExistence type="inferred from homology"/>
<accession>B8DNS7</accession>
<gene>
    <name evidence="1" type="primary">miaA</name>
    <name type="ordered locus">DvMF_0174</name>
</gene>
<comment type="function">
    <text evidence="1">Catalyzes the transfer of a dimethylallyl group onto the adenine at position 37 in tRNAs that read codons beginning with uridine, leading to the formation of N6-(dimethylallyl)adenosine (i(6)A).</text>
</comment>
<comment type="catalytic activity">
    <reaction evidence="1">
        <text>adenosine(37) in tRNA + dimethylallyl diphosphate = N(6)-dimethylallyladenosine(37) in tRNA + diphosphate</text>
        <dbReference type="Rhea" id="RHEA:26482"/>
        <dbReference type="Rhea" id="RHEA-COMP:10162"/>
        <dbReference type="Rhea" id="RHEA-COMP:10375"/>
        <dbReference type="ChEBI" id="CHEBI:33019"/>
        <dbReference type="ChEBI" id="CHEBI:57623"/>
        <dbReference type="ChEBI" id="CHEBI:74411"/>
        <dbReference type="ChEBI" id="CHEBI:74415"/>
        <dbReference type="EC" id="2.5.1.75"/>
    </reaction>
</comment>
<comment type="cofactor">
    <cofactor evidence="1">
        <name>Mg(2+)</name>
        <dbReference type="ChEBI" id="CHEBI:18420"/>
    </cofactor>
</comment>
<comment type="subunit">
    <text evidence="1">Monomer.</text>
</comment>
<comment type="similarity">
    <text evidence="1">Belongs to the IPP transferase family.</text>
</comment>
<evidence type="ECO:0000255" key="1">
    <source>
        <dbReference type="HAMAP-Rule" id="MF_00185"/>
    </source>
</evidence>
<name>MIAA_NITV9</name>
<organism>
    <name type="scientific">Nitratidesulfovibrio vulgaris (strain DSM 19637 / Miyazaki F)</name>
    <name type="common">Desulfovibrio vulgaris</name>
    <dbReference type="NCBI Taxonomy" id="883"/>
    <lineage>
        <taxon>Bacteria</taxon>
        <taxon>Pseudomonadati</taxon>
        <taxon>Thermodesulfobacteriota</taxon>
        <taxon>Desulfovibrionia</taxon>
        <taxon>Desulfovibrionales</taxon>
        <taxon>Desulfovibrionaceae</taxon>
        <taxon>Nitratidesulfovibrio</taxon>
    </lineage>
</organism>
<reference key="1">
    <citation type="submission" date="2008-10" db="EMBL/GenBank/DDBJ databases">
        <title>Complete sequence of Desulfovibrio vulgaris str. 'Miyazaki F'.</title>
        <authorList>
            <person name="Lucas S."/>
            <person name="Copeland A."/>
            <person name="Lapidus A."/>
            <person name="Glavina del Rio T."/>
            <person name="Dalin E."/>
            <person name="Tice H."/>
            <person name="Bruce D."/>
            <person name="Goodwin L."/>
            <person name="Pitluck S."/>
            <person name="Sims D."/>
            <person name="Brettin T."/>
            <person name="Detter J.C."/>
            <person name="Han C."/>
            <person name="Larimer F."/>
            <person name="Land M."/>
            <person name="Hauser L."/>
            <person name="Kyrpides N."/>
            <person name="Mikhailova N."/>
            <person name="Hazen T.C."/>
            <person name="Richardson P."/>
        </authorList>
    </citation>
    <scope>NUCLEOTIDE SEQUENCE [LARGE SCALE GENOMIC DNA]</scope>
    <source>
        <strain>DSM 19637 / Miyazaki F</strain>
    </source>
</reference>
<sequence length="337" mass="36917">MSLSDNFADSLISAPPIRVICLVGPTGAGKTAAALHLARTFGGGVVNADSRQVYRDFPVITAQPSPEERAVCPHLLYGFLPSTEKISAGVWTDKATVVIEELCREEPGHNTSRQATSRPDGLVPLLVGGTGLYLKTLLDGIADIPRVDPAIGARLERECDALGAPALHARLASIDPDYAARIHPNDRQRAVRALEVHEGTGHALSWWHARPVPRPRYAALRIGMDMSLDELTPRLDRRIDLMLEAGALDEARAARTVCDDPAAPGWSGIGCAELYRYLTGELPWAEARLLWLRNTRAYAKRQLTWFRADKRIHWVRPDDLDAMAALACAFLRGETAE</sequence>
<keyword id="KW-0067">ATP-binding</keyword>
<keyword id="KW-0460">Magnesium</keyword>
<keyword id="KW-0547">Nucleotide-binding</keyword>
<keyword id="KW-0808">Transferase</keyword>
<keyword id="KW-0819">tRNA processing</keyword>
<protein>
    <recommendedName>
        <fullName evidence="1">tRNA dimethylallyltransferase</fullName>
        <ecNumber evidence="1">2.5.1.75</ecNumber>
    </recommendedName>
    <alternativeName>
        <fullName evidence="1">Dimethylallyl diphosphate:tRNA dimethylallyltransferase</fullName>
        <shortName evidence="1">DMAPP:tRNA dimethylallyltransferase</shortName>
        <shortName evidence="1">DMATase</shortName>
    </alternativeName>
    <alternativeName>
        <fullName evidence="1">Isopentenyl-diphosphate:tRNA isopentenyltransferase</fullName>
        <shortName evidence="1">IPP transferase</shortName>
        <shortName evidence="1">IPPT</shortName>
        <shortName evidence="1">IPTase</shortName>
    </alternativeName>
</protein>
<dbReference type="EC" id="2.5.1.75" evidence="1"/>
<dbReference type="EMBL" id="CP001197">
    <property type="protein sequence ID" value="ACL07134.1"/>
    <property type="molecule type" value="Genomic_DNA"/>
</dbReference>
<dbReference type="SMR" id="B8DNS7"/>
<dbReference type="STRING" id="883.DvMF_0174"/>
<dbReference type="KEGG" id="dvm:DvMF_0174"/>
<dbReference type="eggNOG" id="COG0324">
    <property type="taxonomic scope" value="Bacteria"/>
</dbReference>
<dbReference type="HOGENOM" id="CLU_032616_0_1_7"/>
<dbReference type="OrthoDB" id="9776390at2"/>
<dbReference type="GO" id="GO:0005524">
    <property type="term" value="F:ATP binding"/>
    <property type="evidence" value="ECO:0007669"/>
    <property type="project" value="UniProtKB-UniRule"/>
</dbReference>
<dbReference type="GO" id="GO:0052381">
    <property type="term" value="F:tRNA dimethylallyltransferase activity"/>
    <property type="evidence" value="ECO:0007669"/>
    <property type="project" value="UniProtKB-UniRule"/>
</dbReference>
<dbReference type="GO" id="GO:0006400">
    <property type="term" value="P:tRNA modification"/>
    <property type="evidence" value="ECO:0007669"/>
    <property type="project" value="TreeGrafter"/>
</dbReference>
<dbReference type="FunFam" id="1.10.20.140:FF:000001">
    <property type="entry name" value="tRNA dimethylallyltransferase"/>
    <property type="match status" value="1"/>
</dbReference>
<dbReference type="Gene3D" id="1.10.20.140">
    <property type="match status" value="1"/>
</dbReference>
<dbReference type="Gene3D" id="3.40.50.300">
    <property type="entry name" value="P-loop containing nucleotide triphosphate hydrolases"/>
    <property type="match status" value="1"/>
</dbReference>
<dbReference type="HAMAP" id="MF_00185">
    <property type="entry name" value="IPP_trans"/>
    <property type="match status" value="1"/>
</dbReference>
<dbReference type="InterPro" id="IPR039657">
    <property type="entry name" value="Dimethylallyltransferase"/>
</dbReference>
<dbReference type="InterPro" id="IPR018022">
    <property type="entry name" value="IPT"/>
</dbReference>
<dbReference type="InterPro" id="IPR027417">
    <property type="entry name" value="P-loop_NTPase"/>
</dbReference>
<dbReference type="NCBIfam" id="TIGR00174">
    <property type="entry name" value="miaA"/>
    <property type="match status" value="1"/>
</dbReference>
<dbReference type="PANTHER" id="PTHR11088">
    <property type="entry name" value="TRNA DIMETHYLALLYLTRANSFERASE"/>
    <property type="match status" value="1"/>
</dbReference>
<dbReference type="PANTHER" id="PTHR11088:SF60">
    <property type="entry name" value="TRNA DIMETHYLALLYLTRANSFERASE"/>
    <property type="match status" value="1"/>
</dbReference>
<dbReference type="Pfam" id="PF01715">
    <property type="entry name" value="IPPT"/>
    <property type="match status" value="1"/>
</dbReference>
<dbReference type="SUPFAM" id="SSF52540">
    <property type="entry name" value="P-loop containing nucleoside triphosphate hydrolases"/>
    <property type="match status" value="1"/>
</dbReference>